<comment type="function">
    <text>Actins are highly conserved proteins that are involved in various types of cell motility and are ubiquitously expressed in all eukaryotic cells.</text>
</comment>
<comment type="catalytic activity">
    <reaction evidence="2">
        <text>ATP + H2O = ADP + phosphate + H(+)</text>
        <dbReference type="Rhea" id="RHEA:13065"/>
        <dbReference type="ChEBI" id="CHEBI:15377"/>
        <dbReference type="ChEBI" id="CHEBI:15378"/>
        <dbReference type="ChEBI" id="CHEBI:30616"/>
        <dbReference type="ChEBI" id="CHEBI:43474"/>
        <dbReference type="ChEBI" id="CHEBI:456216"/>
    </reaction>
</comment>
<comment type="subcellular location">
    <subcellularLocation>
        <location>Cytoplasm</location>
    </subcellularLocation>
    <subcellularLocation>
        <location>Cytoplasm</location>
        <location>Cytoskeleton</location>
    </subcellularLocation>
</comment>
<comment type="similarity">
    <text evidence="3">Belongs to the actin family.</text>
</comment>
<protein>
    <recommendedName>
        <fullName>Actin, cytoskeletal</fullName>
        <ecNumber evidence="2">3.6.4.-</ecNumber>
    </recommendedName>
    <alternativeName>
        <fullName>M</fullName>
    </alternativeName>
</protein>
<keyword id="KW-0007">Acetylation</keyword>
<keyword id="KW-0067">ATP-binding</keyword>
<keyword id="KW-0963">Cytoplasm</keyword>
<keyword id="KW-0206">Cytoskeleton</keyword>
<keyword id="KW-0378">Hydrolase</keyword>
<keyword id="KW-0547">Nucleotide-binding</keyword>
<organism>
    <name type="scientific">Heliocidaris tuberculata</name>
    <name type="common">Sea urchin</name>
    <dbReference type="NCBI Taxonomy" id="7635"/>
    <lineage>
        <taxon>Eukaryota</taxon>
        <taxon>Metazoa</taxon>
        <taxon>Echinodermata</taxon>
        <taxon>Eleutherozoa</taxon>
        <taxon>Echinozoa</taxon>
        <taxon>Echinoidea</taxon>
        <taxon>Euechinoidea</taxon>
        <taxon>Echinacea</taxon>
        <taxon>Camarodonta</taxon>
        <taxon>Echinidea</taxon>
        <taxon>Echinometridae</taxon>
        <taxon>Heliocidaris</taxon>
    </lineage>
</organism>
<reference key="1">
    <citation type="journal article" date="1997" name="Mol. Biol. Evol.">
        <title>Rapid evolution in a conserved gene family. Evolution of the actin gene family in the sea urchin genus Heliocidaris and related genera.</title>
        <authorList>
            <person name="Kissinger J.C."/>
            <person name="Hahn J.-H."/>
            <person name="Raff R.A."/>
        </authorList>
    </citation>
    <scope>NUCLEOTIDE SEQUENCE [GENOMIC DNA]</scope>
</reference>
<proteinExistence type="inferred from homology"/>
<dbReference type="EC" id="3.6.4.-" evidence="2"/>
<dbReference type="EMBL" id="U32357">
    <property type="protein sequence ID" value="AAA86534.1"/>
    <property type="molecule type" value="Genomic_DNA"/>
</dbReference>
<dbReference type="EMBL" id="U32353">
    <property type="protein sequence ID" value="AAA86534.1"/>
    <property type="status" value="JOINED"/>
    <property type="molecule type" value="Genomic_DNA"/>
</dbReference>
<dbReference type="EMBL" id="U32354">
    <property type="protein sequence ID" value="AAA86534.1"/>
    <property type="status" value="JOINED"/>
    <property type="molecule type" value="Genomic_DNA"/>
</dbReference>
<dbReference type="EMBL" id="U32355">
    <property type="protein sequence ID" value="AAA86534.1"/>
    <property type="status" value="JOINED"/>
    <property type="molecule type" value="Genomic_DNA"/>
</dbReference>
<dbReference type="EMBL" id="U32356">
    <property type="protein sequence ID" value="AAA86534.1"/>
    <property type="status" value="JOINED"/>
    <property type="molecule type" value="Genomic_DNA"/>
</dbReference>
<dbReference type="SMR" id="P53464"/>
<dbReference type="GO" id="GO:0005737">
    <property type="term" value="C:cytoplasm"/>
    <property type="evidence" value="ECO:0007669"/>
    <property type="project" value="UniProtKB-SubCell"/>
</dbReference>
<dbReference type="GO" id="GO:0005856">
    <property type="term" value="C:cytoskeleton"/>
    <property type="evidence" value="ECO:0007669"/>
    <property type="project" value="UniProtKB-SubCell"/>
</dbReference>
<dbReference type="GO" id="GO:0005524">
    <property type="term" value="F:ATP binding"/>
    <property type="evidence" value="ECO:0007669"/>
    <property type="project" value="UniProtKB-KW"/>
</dbReference>
<dbReference type="GO" id="GO:0016787">
    <property type="term" value="F:hydrolase activity"/>
    <property type="evidence" value="ECO:0007669"/>
    <property type="project" value="UniProtKB-KW"/>
</dbReference>
<dbReference type="CDD" id="cd10224">
    <property type="entry name" value="ASKHA_NBD_actin"/>
    <property type="match status" value="1"/>
</dbReference>
<dbReference type="FunFam" id="3.30.420.40:FF:000131">
    <property type="entry name" value="Actin, alpha skeletal muscle"/>
    <property type="match status" value="1"/>
</dbReference>
<dbReference type="FunFam" id="3.30.420.40:FF:000291">
    <property type="entry name" value="Actin, alpha skeletal muscle"/>
    <property type="match status" value="1"/>
</dbReference>
<dbReference type="FunFam" id="3.90.640.10:FF:000047">
    <property type="entry name" value="Actin, alpha skeletal muscle"/>
    <property type="match status" value="1"/>
</dbReference>
<dbReference type="FunFam" id="3.30.420.40:FF:000058">
    <property type="entry name" value="Putative actin-related protein 5"/>
    <property type="match status" value="1"/>
</dbReference>
<dbReference type="Gene3D" id="3.30.420.40">
    <property type="match status" value="2"/>
</dbReference>
<dbReference type="Gene3D" id="3.90.640.10">
    <property type="entry name" value="Actin, Chain A, domain 4"/>
    <property type="match status" value="1"/>
</dbReference>
<dbReference type="InterPro" id="IPR004000">
    <property type="entry name" value="Actin"/>
</dbReference>
<dbReference type="InterPro" id="IPR020902">
    <property type="entry name" value="Actin/actin-like_CS"/>
</dbReference>
<dbReference type="InterPro" id="IPR004001">
    <property type="entry name" value="Actin_CS"/>
</dbReference>
<dbReference type="InterPro" id="IPR043129">
    <property type="entry name" value="ATPase_NBD"/>
</dbReference>
<dbReference type="PANTHER" id="PTHR11937">
    <property type="entry name" value="ACTIN"/>
    <property type="match status" value="1"/>
</dbReference>
<dbReference type="Pfam" id="PF00022">
    <property type="entry name" value="Actin"/>
    <property type="match status" value="1"/>
</dbReference>
<dbReference type="PRINTS" id="PR00190">
    <property type="entry name" value="ACTIN"/>
</dbReference>
<dbReference type="SMART" id="SM00268">
    <property type="entry name" value="ACTIN"/>
    <property type="match status" value="1"/>
</dbReference>
<dbReference type="SUPFAM" id="SSF53067">
    <property type="entry name" value="Actin-like ATPase domain"/>
    <property type="match status" value="2"/>
</dbReference>
<dbReference type="PROSITE" id="PS00406">
    <property type="entry name" value="ACTINS_1"/>
    <property type="match status" value="1"/>
</dbReference>
<dbReference type="PROSITE" id="PS00432">
    <property type="entry name" value="ACTINS_2"/>
    <property type="match status" value="1"/>
</dbReference>
<dbReference type="PROSITE" id="PS01132">
    <property type="entry name" value="ACTINS_ACT_LIKE"/>
    <property type="match status" value="1"/>
</dbReference>
<name>ACTM_HELTB</name>
<feature type="propeptide" id="PRO_0000000682" description="Removed in mature form" evidence="1">
    <location>
        <begin position="1"/>
        <end position="2"/>
    </location>
</feature>
<feature type="chain" id="PRO_0000000683" description="Actin, cytoskeletal">
    <location>
        <begin position="3"/>
        <end position="376"/>
    </location>
</feature>
<feature type="modified residue" description="N-acetylaspartate" evidence="1">
    <location>
        <position position="3"/>
    </location>
</feature>
<evidence type="ECO:0000250" key="1"/>
<evidence type="ECO:0000250" key="2">
    <source>
        <dbReference type="UniProtKB" id="P68137"/>
    </source>
</evidence>
<evidence type="ECO:0000305" key="3"/>
<accession>P53464</accession>
<sequence>MCDDEVAALVVDNGSGMCKAGFAGDDAPRAVFPSIVGRPRHQGVMVGMGQKDSYVGDEAQSKRGILTLKYPIEHGIVTNWDDMEKIWHHTFYNELRVAPEEHPVLLTEAPLNPKANREKMTQIMFETFNAPAMYVAIQAVLSLYASGRTTGIVLDSGDGVTHTVPIYEGYALPHAILRLDLAGRDLTDYLMKILTERGYSFTTTAEREIVRDIKEKLCYTALDFEQEMATAAASSSLEKSYELPDGQVITIGNERFRCPETLFQPAFIGMESAGIHETTYNSIMKCDIDIRKDLYANTVLSGGTSMYPGIADRMQKEITALAPSSMKIKIIAPPERKYSVWIGGSILASLSTFQQMWISKQEYDESGPSIVHRKCF</sequence>